<keyword id="KW-1185">Reference proteome</keyword>
<name>YR155_MIMIV</name>
<accession>Q5UPL5</accession>
<organismHost>
    <name type="scientific">Acanthamoeba polyphaga</name>
    <name type="common">Amoeba</name>
    <dbReference type="NCBI Taxonomy" id="5757"/>
</organismHost>
<organism>
    <name type="scientific">Acanthamoeba polyphaga mimivirus</name>
    <name type="common">APMV</name>
    <dbReference type="NCBI Taxonomy" id="212035"/>
    <lineage>
        <taxon>Viruses</taxon>
        <taxon>Varidnaviria</taxon>
        <taxon>Bamfordvirae</taxon>
        <taxon>Nucleocytoviricota</taxon>
        <taxon>Megaviricetes</taxon>
        <taxon>Imitervirales</taxon>
        <taxon>Mimiviridae</taxon>
        <taxon>Megamimivirinae</taxon>
        <taxon>Mimivirus</taxon>
        <taxon>Mimivirus bradfordmassiliense</taxon>
    </lineage>
</organism>
<protein>
    <recommendedName>
        <fullName>Uncharacterized protein R155</fullName>
    </recommendedName>
</protein>
<gene>
    <name type="ordered locus">MIMI_R155</name>
</gene>
<reference key="1">
    <citation type="journal article" date="2004" name="Science">
        <title>The 1.2-megabase genome sequence of Mimivirus.</title>
        <authorList>
            <person name="Raoult D."/>
            <person name="Audic S."/>
            <person name="Robert C."/>
            <person name="Abergel C."/>
            <person name="Renesto P."/>
            <person name="Ogata H."/>
            <person name="La Scola B."/>
            <person name="Susan M."/>
            <person name="Claverie J.-M."/>
        </authorList>
    </citation>
    <scope>NUCLEOTIDE SEQUENCE [LARGE SCALE GENOMIC DNA]</scope>
    <source>
        <strain>Rowbotham-Bradford</strain>
    </source>
</reference>
<dbReference type="EMBL" id="AY653733">
    <property type="protein sequence ID" value="AAV50430.1"/>
    <property type="molecule type" value="Genomic_DNA"/>
</dbReference>
<dbReference type="KEGG" id="vg:9924755"/>
<dbReference type="Proteomes" id="UP000001134">
    <property type="component" value="Genome"/>
</dbReference>
<proteinExistence type="predicted"/>
<feature type="chain" id="PRO_0000253262" description="Uncharacterized protein R155">
    <location>
        <begin position="1"/>
        <end position="142"/>
    </location>
</feature>
<sequence>MYSFYKPFGFVNTDINKPIDKPIMSCSTHTYNNDKLVYKQFKRLTKLNNDLKKFCDDPDFVNSTFRRNIIYNIHNKRIHLIKKLSMIEPDITYNKFIIMWTKNSFNKIKSTSRKVPKEAKSDWYLYKNFVFVQGLNRHKQTV</sequence>